<protein>
    <recommendedName>
        <fullName evidence="1">EARP and GARP complex-interacting protein 1</fullName>
    </recommendedName>
    <alternativeName>
        <fullName evidence="1">Endosome-associated recycling protein-interacting protein</fullName>
    </alternativeName>
    <alternativeName>
        <fullName evidence="1">Golgi-associated retrograde protein-interacting protein</fullName>
    </alternativeName>
    <alternativeName>
        <fullName>Tumor-suppressing STF cDNA 1 protein</fullName>
    </alternativeName>
    <alternativeName>
        <fullName evidence="1">Tumor-suppressing subchromosomal transferable fragment candidate gene 1 protein</fullName>
    </alternativeName>
</protein>
<sequence>MEDDAPVIYGLEFQARALTPQTAETDAIRFLVGTQSLKYDNQIHIIDFDDENNIINKNVLLHQVGEIWHISASPADRGVLATCYNRTFCCVLSLDSFGALGKSSAQLFIALATSSDSKVLTCAAVWRMPKELESGSHESPDDSSSTAQTLELLCHLDNTAHGNMACVVWEPMGDGKKIISLADNHILLWDLQESSSQAVLASSASLEGKGQLKFTSGRWSPHHNCTQVATANDTTLRGWDTRSMSQIYCIENAHGQLVRDLDFNPNKQYYLASCGDDCKVKFWDTRNVTEPVKTLEEHSHWVWNVRYNHSHDQLVLTGSSDSRVILSNMVSISSEPFGHLVDDDDISDQEDHRSEEKSKEPLQDNVIATYEEHEDSVYAVDWSSADPWLFASLSYDGRLVINRVPRALKYHILL</sequence>
<accession>Q5RE10</accession>
<comment type="function">
    <text evidence="1 2">Acts as a component of endosomal retrieval machinery that is involved in protein transport from early endosomes to either recycling endosomes or the trans-Golgi network (By similarity). Mediates the recruitment of Golgi-associated retrograde protein (GARP) complex to the trans-Golgi network and controls early endosome-to-Golgi transport of internalized protein (By similarity). Promotes the recycling of internalized transferrin receptor (TFRC) to the plasma membrane through interaction with endosome-associated recycling protein (EARP) complex (By similarity). Controls proper insulin distribution and secretion, and retention of cargo in mature dense core vesicles (By similarity). Required for the stability of the endosome-associated retrograde protein (EARP) complex subunits and for proper localization and association of EARP with membranes (By similarity).</text>
</comment>
<comment type="subunit">
    <text evidence="1">Interacts with two multisubunit tethering complexes: EARP composed of VPS50, VPS51, VPS52 and VPS53 subunits and GARP complex composed of VPS51, VPS52, VPS53 and VPS54 subunits. Interacts with SNAP29.</text>
</comment>
<comment type="subcellular location">
    <subcellularLocation>
        <location evidence="1">Golgi apparatus</location>
        <location evidence="1">trans-Golgi network</location>
    </subcellularLocation>
</comment>
<comment type="similarity">
    <text evidence="4">Belongs to the WD repeat EIPR1 family.</text>
</comment>
<reference key="1">
    <citation type="submission" date="2004-11" db="EMBL/GenBank/DDBJ databases">
        <authorList>
            <consortium name="The German cDNA consortium"/>
        </authorList>
    </citation>
    <scope>NUCLEOTIDE SEQUENCE [LARGE SCALE MRNA]</scope>
    <source>
        <tissue>Kidney</tissue>
    </source>
</reference>
<keyword id="KW-0007">Acetylation</keyword>
<keyword id="KW-0333">Golgi apparatus</keyword>
<keyword id="KW-0597">Phosphoprotein</keyword>
<keyword id="KW-1185">Reference proteome</keyword>
<keyword id="KW-0677">Repeat</keyword>
<keyword id="KW-0853">WD repeat</keyword>
<proteinExistence type="evidence at transcript level"/>
<feature type="chain" id="PRO_0000051301" description="EARP and GARP complex-interacting protein 1">
    <location>
        <begin position="1"/>
        <end position="414"/>
    </location>
</feature>
<feature type="repeat" description="WD 1">
    <location>
        <begin position="159"/>
        <end position="199"/>
    </location>
</feature>
<feature type="repeat" description="WD 2">
    <location>
        <begin position="209"/>
        <end position="249"/>
    </location>
</feature>
<feature type="repeat" description="WD 3">
    <location>
        <begin position="253"/>
        <end position="293"/>
    </location>
</feature>
<feature type="repeat" description="WD 4">
    <location>
        <begin position="297"/>
        <end position="337"/>
    </location>
</feature>
<feature type="repeat" description="WD 5">
    <location>
        <begin position="372"/>
        <end position="412"/>
    </location>
</feature>
<feature type="region of interest" description="Disordered" evidence="3">
    <location>
        <begin position="337"/>
        <end position="362"/>
    </location>
</feature>
<feature type="compositionally biased region" description="Basic and acidic residues" evidence="3">
    <location>
        <begin position="349"/>
        <end position="362"/>
    </location>
</feature>
<feature type="modified residue" description="N-acetylmethionine" evidence="1">
    <location>
        <position position="1"/>
    </location>
</feature>
<feature type="modified residue" description="Phosphoserine" evidence="1">
    <location>
        <position position="347"/>
    </location>
</feature>
<gene>
    <name evidence="1" type="primary">EIPR1</name>
</gene>
<name>EIPR1_PONAB</name>
<evidence type="ECO:0000250" key="1">
    <source>
        <dbReference type="UniProtKB" id="Q53HC9"/>
    </source>
</evidence>
<evidence type="ECO:0000250" key="2">
    <source>
        <dbReference type="UniProtKB" id="Q5PPK9"/>
    </source>
</evidence>
<evidence type="ECO:0000256" key="3">
    <source>
        <dbReference type="SAM" id="MobiDB-lite"/>
    </source>
</evidence>
<evidence type="ECO:0000305" key="4"/>
<organism>
    <name type="scientific">Pongo abelii</name>
    <name type="common">Sumatran orangutan</name>
    <name type="synonym">Pongo pygmaeus abelii</name>
    <dbReference type="NCBI Taxonomy" id="9601"/>
    <lineage>
        <taxon>Eukaryota</taxon>
        <taxon>Metazoa</taxon>
        <taxon>Chordata</taxon>
        <taxon>Craniata</taxon>
        <taxon>Vertebrata</taxon>
        <taxon>Euteleostomi</taxon>
        <taxon>Mammalia</taxon>
        <taxon>Eutheria</taxon>
        <taxon>Euarchontoglires</taxon>
        <taxon>Primates</taxon>
        <taxon>Haplorrhini</taxon>
        <taxon>Catarrhini</taxon>
        <taxon>Hominidae</taxon>
        <taxon>Pongo</taxon>
    </lineage>
</organism>
<dbReference type="EMBL" id="CR857729">
    <property type="protein sequence ID" value="CAH89997.1"/>
    <property type="molecule type" value="mRNA"/>
</dbReference>
<dbReference type="RefSeq" id="NP_001124947.1">
    <property type="nucleotide sequence ID" value="NM_001131475.2"/>
</dbReference>
<dbReference type="SMR" id="Q5RE10"/>
<dbReference type="FunCoup" id="Q5RE10">
    <property type="interactions" value="1325"/>
</dbReference>
<dbReference type="STRING" id="9601.ENSPPYP00000014159"/>
<dbReference type="Ensembl" id="ENSPPYT00000014734.3">
    <property type="protein sequence ID" value="ENSPPYP00000014159.3"/>
    <property type="gene ID" value="ENSPPYG00000012685.3"/>
</dbReference>
<dbReference type="GeneID" id="100171819"/>
<dbReference type="KEGG" id="pon:100171819"/>
<dbReference type="CTD" id="7260"/>
<dbReference type="eggNOG" id="KOG1007">
    <property type="taxonomic scope" value="Eukaryota"/>
</dbReference>
<dbReference type="GeneTree" id="ENSGT00730000111137"/>
<dbReference type="InParanoid" id="Q5RE10"/>
<dbReference type="OMA" id="HKYAILR"/>
<dbReference type="OrthoDB" id="196957at2759"/>
<dbReference type="Proteomes" id="UP000001595">
    <property type="component" value="Chromosome 2A"/>
</dbReference>
<dbReference type="GO" id="GO:1990745">
    <property type="term" value="C:EARP complex"/>
    <property type="evidence" value="ECO:0007669"/>
    <property type="project" value="Ensembl"/>
</dbReference>
<dbReference type="GO" id="GO:0000938">
    <property type="term" value="C:GARP complex"/>
    <property type="evidence" value="ECO:0007669"/>
    <property type="project" value="Ensembl"/>
</dbReference>
<dbReference type="GO" id="GO:0005802">
    <property type="term" value="C:trans-Golgi network"/>
    <property type="evidence" value="ECO:0000250"/>
    <property type="project" value="UniProtKB"/>
</dbReference>
<dbReference type="GO" id="GO:0032456">
    <property type="term" value="P:endocytic recycling"/>
    <property type="evidence" value="ECO:0000250"/>
    <property type="project" value="UniProtKB"/>
</dbReference>
<dbReference type="GO" id="GO:2001137">
    <property type="term" value="P:positive regulation of endocytic recycling"/>
    <property type="evidence" value="ECO:0000250"/>
    <property type="project" value="UniProtKB"/>
</dbReference>
<dbReference type="GO" id="GO:1905281">
    <property type="term" value="P:positive regulation of retrograde transport, endosome to Golgi"/>
    <property type="evidence" value="ECO:0000250"/>
    <property type="project" value="UniProtKB"/>
</dbReference>
<dbReference type="GO" id="GO:0016567">
    <property type="term" value="P:protein ubiquitination"/>
    <property type="evidence" value="ECO:0007669"/>
    <property type="project" value="TreeGrafter"/>
</dbReference>
<dbReference type="GO" id="GO:0050796">
    <property type="term" value="P:regulation of insulin secretion"/>
    <property type="evidence" value="ECO:0000250"/>
    <property type="project" value="UniProtKB"/>
</dbReference>
<dbReference type="FunFam" id="2.130.10.10:FF:000156">
    <property type="entry name" value="protein TSSC1 isoform X1"/>
    <property type="match status" value="1"/>
</dbReference>
<dbReference type="Gene3D" id="2.130.10.10">
    <property type="entry name" value="YVTN repeat-like/Quinoprotein amine dehydrogenase"/>
    <property type="match status" value="1"/>
</dbReference>
<dbReference type="InterPro" id="IPR040323">
    <property type="entry name" value="EIPR1"/>
</dbReference>
<dbReference type="InterPro" id="IPR015943">
    <property type="entry name" value="WD40/YVTN_repeat-like_dom_sf"/>
</dbReference>
<dbReference type="InterPro" id="IPR019775">
    <property type="entry name" value="WD40_repeat_CS"/>
</dbReference>
<dbReference type="InterPro" id="IPR001680">
    <property type="entry name" value="WD40_rpt"/>
</dbReference>
<dbReference type="PANTHER" id="PTHR14205:SF15">
    <property type="entry name" value="EARP AND GARP COMPLEX-INTERACTING PROTEIN 1"/>
    <property type="match status" value="1"/>
</dbReference>
<dbReference type="PANTHER" id="PTHR14205">
    <property type="entry name" value="WD-REPEAT PROTEIN"/>
    <property type="match status" value="1"/>
</dbReference>
<dbReference type="Pfam" id="PF23609">
    <property type="entry name" value="Beta-prop_EIPR1"/>
    <property type="match status" value="2"/>
</dbReference>
<dbReference type="Pfam" id="PF00400">
    <property type="entry name" value="WD40"/>
    <property type="match status" value="1"/>
</dbReference>
<dbReference type="SMART" id="SM00320">
    <property type="entry name" value="WD40"/>
    <property type="match status" value="5"/>
</dbReference>
<dbReference type="SUPFAM" id="SSF101908">
    <property type="entry name" value="Putative isomerase YbhE"/>
    <property type="match status" value="1"/>
</dbReference>
<dbReference type="PROSITE" id="PS00678">
    <property type="entry name" value="WD_REPEATS_1"/>
    <property type="match status" value="1"/>
</dbReference>
<dbReference type="PROSITE" id="PS50082">
    <property type="entry name" value="WD_REPEATS_2"/>
    <property type="match status" value="1"/>
</dbReference>
<dbReference type="PROSITE" id="PS50294">
    <property type="entry name" value="WD_REPEATS_REGION"/>
    <property type="match status" value="1"/>
</dbReference>